<evidence type="ECO:0000255" key="1">
    <source>
        <dbReference type="HAMAP-Rule" id="MF_04034"/>
    </source>
</evidence>
<evidence type="ECO:0000255" key="2">
    <source>
        <dbReference type="PROSITE-ProRule" id="PRU01368"/>
    </source>
</evidence>
<reference key="1">
    <citation type="journal article" date="1992" name="Virology">
        <title>The DNA sequence of equine herpesvirus-1.</title>
        <authorList>
            <person name="Telford E.A.R."/>
            <person name="Watson M.S."/>
            <person name="McBride K."/>
            <person name="Davison A.J."/>
        </authorList>
    </citation>
    <scope>NUCLEOTIDE SEQUENCE [LARGE SCALE GENOMIC DNA]</scope>
</reference>
<protein>
    <recommendedName>
        <fullName evidence="1">Envelope glycoprotein L</fullName>
        <shortName evidence="1">gL</shortName>
    </recommendedName>
</protein>
<dbReference type="EMBL" id="AY665713">
    <property type="protein sequence ID" value="AAT67319.1"/>
    <property type="molecule type" value="Genomic_DNA"/>
</dbReference>
<dbReference type="PIR" id="H36801">
    <property type="entry name" value="WZBEF4"/>
</dbReference>
<dbReference type="SMR" id="P28941"/>
<dbReference type="Proteomes" id="UP000001189">
    <property type="component" value="Segment"/>
</dbReference>
<dbReference type="GO" id="GO:0044177">
    <property type="term" value="C:host cell Golgi apparatus"/>
    <property type="evidence" value="ECO:0007669"/>
    <property type="project" value="UniProtKB-SubCell"/>
</dbReference>
<dbReference type="GO" id="GO:0020002">
    <property type="term" value="C:host cell plasma membrane"/>
    <property type="evidence" value="ECO:0007669"/>
    <property type="project" value="UniProtKB-SubCell"/>
</dbReference>
<dbReference type="GO" id="GO:0016020">
    <property type="term" value="C:membrane"/>
    <property type="evidence" value="ECO:0007669"/>
    <property type="project" value="UniProtKB-KW"/>
</dbReference>
<dbReference type="GO" id="GO:0019031">
    <property type="term" value="C:viral envelope"/>
    <property type="evidence" value="ECO:0007669"/>
    <property type="project" value="UniProtKB-KW"/>
</dbReference>
<dbReference type="GO" id="GO:0055036">
    <property type="term" value="C:virion membrane"/>
    <property type="evidence" value="ECO:0007669"/>
    <property type="project" value="UniProtKB-SubCell"/>
</dbReference>
<dbReference type="GO" id="GO:0019064">
    <property type="term" value="P:fusion of virus membrane with host plasma membrane"/>
    <property type="evidence" value="ECO:0007669"/>
    <property type="project" value="UniProtKB-KW"/>
</dbReference>
<dbReference type="GO" id="GO:0046718">
    <property type="term" value="P:symbiont entry into host cell"/>
    <property type="evidence" value="ECO:0007669"/>
    <property type="project" value="UniProtKB-KW"/>
</dbReference>
<dbReference type="Gene3D" id="3.30.390.170">
    <property type="match status" value="1"/>
</dbReference>
<dbReference type="HAMAP" id="MF_04034">
    <property type="entry name" value="HSV_GL_alphagamma"/>
    <property type="match status" value="1"/>
</dbReference>
<dbReference type="InterPro" id="IPR022200">
    <property type="entry name" value="Herpes_gL_C"/>
</dbReference>
<dbReference type="InterPro" id="IPR007923">
    <property type="entry name" value="Herpes_gL_N"/>
</dbReference>
<dbReference type="InterPro" id="IPR038311">
    <property type="entry name" value="Herpes_gL_N_sf"/>
</dbReference>
<dbReference type="InterPro" id="IPR034708">
    <property type="entry name" value="HSV_GL_alphagamma"/>
</dbReference>
<dbReference type="Pfam" id="PF12524">
    <property type="entry name" value="GlyL_C"/>
    <property type="match status" value="1"/>
</dbReference>
<dbReference type="Pfam" id="PF05259">
    <property type="entry name" value="Herpes_UL1"/>
    <property type="match status" value="1"/>
</dbReference>
<dbReference type="PROSITE" id="PS52024">
    <property type="entry name" value="GL_AHV"/>
    <property type="match status" value="1"/>
</dbReference>
<name>GL_EHV1B</name>
<sequence>MYQILIGCVWQKSPYINQCTEFQPPLSFVTPERMRRFMRCWARLELVYMLAWIVTTKLVKATRLDFTWGPGEPKRILEASCGSGPIMKGQLFTSPNIKNLLNRTTGIMVKAHCNPPEAILWVDTPPKPVWVNPFAVVQGLAEDVTNGNMPQDFKEKLLFALDDSLSQSQSSPDEILGPPPLGCFTGPFFLSPPKSKDIAEGLKDSCIPASYYANLQKT</sequence>
<keyword id="KW-1015">Disulfide bond</keyword>
<keyword id="KW-1169">Fusion of virus membrane with host cell membrane</keyword>
<keyword id="KW-1168">Fusion of virus membrane with host membrane</keyword>
<keyword id="KW-0325">Glycoprotein</keyword>
<keyword id="KW-1032">Host cell membrane</keyword>
<keyword id="KW-1040">Host Golgi apparatus</keyword>
<keyword id="KW-1043">Host membrane</keyword>
<keyword id="KW-0472">Membrane</keyword>
<keyword id="KW-1185">Reference proteome</keyword>
<keyword id="KW-0261">Viral envelope protein</keyword>
<keyword id="KW-1162">Viral penetration into host cytoplasm</keyword>
<keyword id="KW-0946">Virion</keyword>
<keyword id="KW-1160">Virus entry into host cell</keyword>
<organismHost>
    <name type="scientific">Equus caballus</name>
    <name type="common">Horse</name>
    <dbReference type="NCBI Taxonomy" id="9796"/>
</organismHost>
<proteinExistence type="inferred from homology"/>
<gene>
    <name evidence="1" type="primary">gL</name>
    <name type="ordered locus">62</name>
</gene>
<organism>
    <name type="scientific">Equine herpesvirus 1 (strain Ab4p)</name>
    <name type="common">EHV-1</name>
    <name type="synonym">Equine abortion virus</name>
    <dbReference type="NCBI Taxonomy" id="31520"/>
    <lineage>
        <taxon>Viruses</taxon>
        <taxon>Duplodnaviria</taxon>
        <taxon>Heunggongvirae</taxon>
        <taxon>Peploviricota</taxon>
        <taxon>Herviviricetes</taxon>
        <taxon>Herpesvirales</taxon>
        <taxon>Orthoherpesviridae</taxon>
        <taxon>Alphaherpesvirinae</taxon>
        <taxon>Varicellovirus</taxon>
        <taxon>Varicellovirus equidalpha1</taxon>
        <taxon>Equid alphaherpesvirus 1</taxon>
    </lineage>
</organism>
<feature type="chain" id="PRO_0000038266" description="Envelope glycoprotein L">
    <location>
        <begin position="1"/>
        <end position="218"/>
    </location>
</feature>
<feature type="domain" description="gL alphaherpesvirus-type" evidence="2">
    <location>
        <begin position="60"/>
        <end position="218"/>
    </location>
</feature>
<feature type="region of interest" description="Interaction with gH" evidence="1">
    <location>
        <begin position="57"/>
        <end position="185"/>
    </location>
</feature>
<feature type="disulfide bond" evidence="2">
    <location>
        <begin position="81"/>
        <end position="113"/>
    </location>
</feature>
<feature type="disulfide bond" evidence="2">
    <location>
        <begin position="183"/>
        <end position="206"/>
    </location>
</feature>
<comment type="function">
    <text evidence="1">The heterodimer glycoprotein H-glycoprotein L is required for the fusion of viral and plasma membranes leading to virus entry into the host cell. Acts as a functional inhibitor of gH and maintains gH in an inhibited form. Upon binding to host integrins, gL dissociates from gH leading to activation of the viral fusion glycoproteins gB and gH.</text>
</comment>
<comment type="subunit">
    <text evidence="1">Interacts with glycoprotein H (gH); this interaction is necessary for the correct processing and cell surface expression of gH. The heterodimer gH/gL seems to interact with gB trimers during fusion.</text>
</comment>
<comment type="subcellular location">
    <subcellularLocation>
        <location evidence="1">Virion membrane</location>
        <topology evidence="1">Peripheral membrane protein</topology>
        <orientation evidence="1">Extracellular side</orientation>
    </subcellularLocation>
    <subcellularLocation>
        <location evidence="1">Host cell membrane</location>
        <topology evidence="1">Peripheral membrane protein</topology>
        <orientation evidence="1">Extracellular side</orientation>
    </subcellularLocation>
    <subcellularLocation>
        <location evidence="1">Host Golgi apparatus</location>
        <location evidence="1">Host trans-Golgi network</location>
    </subcellularLocation>
    <text evidence="1">gL associates with the extravirion surface through its binding to gH. During virion morphogenesis, this protein probably accumulates in the host trans-Golgi where secondary envelopment occurs.</text>
</comment>
<comment type="similarity">
    <text evidence="2">Belongs to the herpesviridae glycoprotein L (gL) family. Alphaherpesvirinae gL subfamily.</text>
</comment>
<accession>P28941</accession>
<accession>Q6S6U2</accession>